<organism>
    <name type="scientific">Dictyostelium discoideum</name>
    <name type="common">Social amoeba</name>
    <dbReference type="NCBI Taxonomy" id="44689"/>
    <lineage>
        <taxon>Eukaryota</taxon>
        <taxon>Amoebozoa</taxon>
        <taxon>Evosea</taxon>
        <taxon>Eumycetozoa</taxon>
        <taxon>Dictyostelia</taxon>
        <taxon>Dictyosteliales</taxon>
        <taxon>Dictyosteliaceae</taxon>
        <taxon>Dictyostelium</taxon>
    </lineage>
</organism>
<keyword id="KW-0175">Coiled coil</keyword>
<keyword id="KW-1185">Reference proteome</keyword>
<dbReference type="EMBL" id="AAFI02000209">
    <property type="protein sequence ID" value="EAL60727.1"/>
    <property type="molecule type" value="Genomic_DNA"/>
</dbReference>
<dbReference type="RefSeq" id="XP_629140.1">
    <property type="nucleotide sequence ID" value="XM_629138.1"/>
</dbReference>
<dbReference type="SMR" id="Q54BT9"/>
<dbReference type="PaxDb" id="44689-DDB0191934"/>
<dbReference type="EnsemblProtists" id="EAL60727">
    <property type="protein sequence ID" value="EAL60727"/>
    <property type="gene ID" value="DDB_G0293430"/>
</dbReference>
<dbReference type="GeneID" id="8629220"/>
<dbReference type="KEGG" id="ddi:DDB_G0293430"/>
<dbReference type="dictyBase" id="DDB_G0293430"/>
<dbReference type="VEuPathDB" id="AmoebaDB:DDB_G0293430"/>
<dbReference type="HOGENOM" id="CLU_3091308_0_0_1"/>
<dbReference type="InParanoid" id="Q54BT9"/>
<dbReference type="PRO" id="PR:Q54BT9"/>
<dbReference type="Proteomes" id="UP000002195">
    <property type="component" value="Chromosome 6"/>
</dbReference>
<sequence length="52" mass="6226">MIKIQLESSNQSVLKLEERRLNLTAEIERIYGQMDLKRKELENANLRLHVFN</sequence>
<reference key="1">
    <citation type="journal article" date="2005" name="Nature">
        <title>The genome of the social amoeba Dictyostelium discoideum.</title>
        <authorList>
            <person name="Eichinger L."/>
            <person name="Pachebat J.A."/>
            <person name="Gloeckner G."/>
            <person name="Rajandream M.A."/>
            <person name="Sucgang R."/>
            <person name="Berriman M."/>
            <person name="Song J."/>
            <person name="Olsen R."/>
            <person name="Szafranski K."/>
            <person name="Xu Q."/>
            <person name="Tunggal B."/>
            <person name="Kummerfeld S."/>
            <person name="Madera M."/>
            <person name="Konfortov B.A."/>
            <person name="Rivero F."/>
            <person name="Bankier A.T."/>
            <person name="Lehmann R."/>
            <person name="Hamlin N."/>
            <person name="Davies R."/>
            <person name="Gaudet P."/>
            <person name="Fey P."/>
            <person name="Pilcher K."/>
            <person name="Chen G."/>
            <person name="Saunders D."/>
            <person name="Sodergren E.J."/>
            <person name="Davis P."/>
            <person name="Kerhornou A."/>
            <person name="Nie X."/>
            <person name="Hall N."/>
            <person name="Anjard C."/>
            <person name="Hemphill L."/>
            <person name="Bason N."/>
            <person name="Farbrother P."/>
            <person name="Desany B."/>
            <person name="Just E."/>
            <person name="Morio T."/>
            <person name="Rost R."/>
            <person name="Churcher C.M."/>
            <person name="Cooper J."/>
            <person name="Haydock S."/>
            <person name="van Driessche N."/>
            <person name="Cronin A."/>
            <person name="Goodhead I."/>
            <person name="Muzny D.M."/>
            <person name="Mourier T."/>
            <person name="Pain A."/>
            <person name="Lu M."/>
            <person name="Harper D."/>
            <person name="Lindsay R."/>
            <person name="Hauser H."/>
            <person name="James K.D."/>
            <person name="Quiles M."/>
            <person name="Madan Babu M."/>
            <person name="Saito T."/>
            <person name="Buchrieser C."/>
            <person name="Wardroper A."/>
            <person name="Felder M."/>
            <person name="Thangavelu M."/>
            <person name="Johnson D."/>
            <person name="Knights A."/>
            <person name="Loulseged H."/>
            <person name="Mungall K.L."/>
            <person name="Oliver K."/>
            <person name="Price C."/>
            <person name="Quail M.A."/>
            <person name="Urushihara H."/>
            <person name="Hernandez J."/>
            <person name="Rabbinowitsch E."/>
            <person name="Steffen D."/>
            <person name="Sanders M."/>
            <person name="Ma J."/>
            <person name="Kohara Y."/>
            <person name="Sharp S."/>
            <person name="Simmonds M.N."/>
            <person name="Spiegler S."/>
            <person name="Tivey A."/>
            <person name="Sugano S."/>
            <person name="White B."/>
            <person name="Walker D."/>
            <person name="Woodward J.R."/>
            <person name="Winckler T."/>
            <person name="Tanaka Y."/>
            <person name="Shaulsky G."/>
            <person name="Schleicher M."/>
            <person name="Weinstock G.M."/>
            <person name="Rosenthal A."/>
            <person name="Cox E.C."/>
            <person name="Chisholm R.L."/>
            <person name="Gibbs R.A."/>
            <person name="Loomis W.F."/>
            <person name="Platzer M."/>
            <person name="Kay R.R."/>
            <person name="Williams J.G."/>
            <person name="Dear P.H."/>
            <person name="Noegel A.A."/>
            <person name="Barrell B.G."/>
            <person name="Kuspa A."/>
        </authorList>
    </citation>
    <scope>NUCLEOTIDE SEQUENCE [LARGE SCALE GENOMIC DNA]</scope>
    <source>
        <strain>AX4</strain>
    </source>
</reference>
<accession>Q54BT9</accession>
<proteinExistence type="predicted"/>
<evidence type="ECO:0000255" key="1"/>
<name>Y1934_DICDI</name>
<protein>
    <recommendedName>
        <fullName>Putative uncharacterized protein DDB_G0293430</fullName>
    </recommendedName>
</protein>
<gene>
    <name type="ORF">DDB_G0293430</name>
</gene>
<feature type="chain" id="PRO_0000344396" description="Putative uncharacterized protein DDB_G0293430">
    <location>
        <begin position="1"/>
        <end position="52"/>
    </location>
</feature>
<feature type="coiled-coil region" evidence="1">
    <location>
        <begin position="3"/>
        <end position="46"/>
    </location>
</feature>